<keyword id="KW-0175">Coiled coil</keyword>
<keyword id="KW-1185">Reference proteome</keyword>
<evidence type="ECO:0000255" key="1"/>
<evidence type="ECO:0000305" key="2"/>
<gene>
    <name type="ordered locus">At3g51220</name>
    <name type="ORF">F24M12.260</name>
</gene>
<protein>
    <recommendedName>
        <fullName>WEB family protein At3g51220</fullName>
    </recommendedName>
</protein>
<comment type="similarity">
    <text evidence="2">Belongs to the WEB family.</text>
</comment>
<feature type="chain" id="PRO_0000414072" description="WEB family protein At3g51220">
    <location>
        <begin position="1"/>
        <end position="186"/>
    </location>
</feature>
<feature type="coiled-coil region" evidence="1">
    <location>
        <begin position="37"/>
        <end position="91"/>
    </location>
</feature>
<feature type="sequence conflict" description="In Ref. 3; BX825223." evidence="2" ref="3">
    <original>R</original>
    <variation>I</variation>
    <location>
        <position position="25"/>
    </location>
</feature>
<feature type="sequence conflict" description="In Ref. 3; BX825223." evidence="2" ref="3">
    <original>S</original>
    <variation>F</variation>
    <location>
        <position position="36"/>
    </location>
</feature>
<feature type="sequence conflict" description="In Ref. 3; BX825223." evidence="2" ref="3">
    <original>C</original>
    <variation>S</variation>
    <location>
        <position position="42"/>
    </location>
</feature>
<feature type="sequence conflict" description="In Ref. 3; BX825223." evidence="2" ref="3">
    <original>Q</original>
    <variation>K</variation>
    <location>
        <position position="46"/>
    </location>
</feature>
<name>Y3122_ARATH</name>
<sequence>MVRAEIETGAPFRSVKEAVTLFGERILLGDNYISKSVERSSCKSIQDELVEAKENLKKAEEENKVLSQLIESLTQELETTKEKLNHSLRNFPEHPQVEDDLKFIEESTVNEPDNITEIKMNRFDRNEVYGDRLEKRRSVKFANPPLLTKVIVGKEEKNQVMVKKQTKKMKPLVPLAAWLFARNRSS</sequence>
<dbReference type="EMBL" id="AL132980">
    <property type="protein sequence ID" value="CAB62644.1"/>
    <property type="molecule type" value="Genomic_DNA"/>
</dbReference>
<dbReference type="EMBL" id="CP002686">
    <property type="protein sequence ID" value="AEE78764.1"/>
    <property type="molecule type" value="Genomic_DNA"/>
</dbReference>
<dbReference type="EMBL" id="BX825223">
    <property type="status" value="NOT_ANNOTATED_CDS"/>
    <property type="molecule type" value="mRNA"/>
</dbReference>
<dbReference type="PIR" id="T45753">
    <property type="entry name" value="T45753"/>
</dbReference>
<dbReference type="RefSeq" id="NP_190690.1">
    <property type="nucleotide sequence ID" value="NM_114981.3"/>
</dbReference>
<dbReference type="SMR" id="Q9SD24"/>
<dbReference type="STRING" id="3702.Q9SD24"/>
<dbReference type="PaxDb" id="3702-AT3G51220.1"/>
<dbReference type="ProteomicsDB" id="234602"/>
<dbReference type="EnsemblPlants" id="AT3G51220.1">
    <property type="protein sequence ID" value="AT3G51220.1"/>
    <property type="gene ID" value="AT3G51220"/>
</dbReference>
<dbReference type="GeneID" id="824285"/>
<dbReference type="Gramene" id="AT3G51220.1">
    <property type="protein sequence ID" value="AT3G51220.1"/>
    <property type="gene ID" value="AT3G51220"/>
</dbReference>
<dbReference type="KEGG" id="ath:AT3G51220"/>
<dbReference type="Araport" id="AT3G51220"/>
<dbReference type="TAIR" id="AT3G51220"/>
<dbReference type="HOGENOM" id="CLU_078358_1_0_1"/>
<dbReference type="InParanoid" id="Q9SD24"/>
<dbReference type="OMA" id="PELDRIM"/>
<dbReference type="PhylomeDB" id="Q9SD24"/>
<dbReference type="PRO" id="PR:Q9SD24"/>
<dbReference type="Proteomes" id="UP000006548">
    <property type="component" value="Chromosome 3"/>
</dbReference>
<dbReference type="ExpressionAtlas" id="Q9SD24">
    <property type="expression patterns" value="baseline and differential"/>
</dbReference>
<accession>Q9SD24</accession>
<proteinExistence type="evidence at transcript level"/>
<reference key="1">
    <citation type="journal article" date="2000" name="Nature">
        <title>Sequence and analysis of chromosome 3 of the plant Arabidopsis thaliana.</title>
        <authorList>
            <person name="Salanoubat M."/>
            <person name="Lemcke K."/>
            <person name="Rieger M."/>
            <person name="Ansorge W."/>
            <person name="Unseld M."/>
            <person name="Fartmann B."/>
            <person name="Valle G."/>
            <person name="Bloecker H."/>
            <person name="Perez-Alonso M."/>
            <person name="Obermaier B."/>
            <person name="Delseny M."/>
            <person name="Boutry M."/>
            <person name="Grivell L.A."/>
            <person name="Mache R."/>
            <person name="Puigdomenech P."/>
            <person name="De Simone V."/>
            <person name="Choisne N."/>
            <person name="Artiguenave F."/>
            <person name="Robert C."/>
            <person name="Brottier P."/>
            <person name="Wincker P."/>
            <person name="Cattolico L."/>
            <person name="Weissenbach J."/>
            <person name="Saurin W."/>
            <person name="Quetier F."/>
            <person name="Schaefer M."/>
            <person name="Mueller-Auer S."/>
            <person name="Gabel C."/>
            <person name="Fuchs M."/>
            <person name="Benes V."/>
            <person name="Wurmbach E."/>
            <person name="Drzonek H."/>
            <person name="Erfle H."/>
            <person name="Jordan N."/>
            <person name="Bangert S."/>
            <person name="Wiedelmann R."/>
            <person name="Kranz H."/>
            <person name="Voss H."/>
            <person name="Holland R."/>
            <person name="Brandt P."/>
            <person name="Nyakatura G."/>
            <person name="Vezzi A."/>
            <person name="D'Angelo M."/>
            <person name="Pallavicini A."/>
            <person name="Toppo S."/>
            <person name="Simionati B."/>
            <person name="Conrad A."/>
            <person name="Hornischer K."/>
            <person name="Kauer G."/>
            <person name="Loehnert T.-H."/>
            <person name="Nordsiek G."/>
            <person name="Reichelt J."/>
            <person name="Scharfe M."/>
            <person name="Schoen O."/>
            <person name="Bargues M."/>
            <person name="Terol J."/>
            <person name="Climent J."/>
            <person name="Navarro P."/>
            <person name="Collado C."/>
            <person name="Perez-Perez A."/>
            <person name="Ottenwaelder B."/>
            <person name="Duchemin D."/>
            <person name="Cooke R."/>
            <person name="Laudie M."/>
            <person name="Berger-Llauro C."/>
            <person name="Purnelle B."/>
            <person name="Masuy D."/>
            <person name="de Haan M."/>
            <person name="Maarse A.C."/>
            <person name="Alcaraz J.-P."/>
            <person name="Cottet A."/>
            <person name="Casacuberta E."/>
            <person name="Monfort A."/>
            <person name="Argiriou A."/>
            <person name="Flores M."/>
            <person name="Liguori R."/>
            <person name="Vitale D."/>
            <person name="Mannhaupt G."/>
            <person name="Haase D."/>
            <person name="Schoof H."/>
            <person name="Rudd S."/>
            <person name="Zaccaria P."/>
            <person name="Mewes H.-W."/>
            <person name="Mayer K.F.X."/>
            <person name="Kaul S."/>
            <person name="Town C.D."/>
            <person name="Koo H.L."/>
            <person name="Tallon L.J."/>
            <person name="Jenkins J."/>
            <person name="Rooney T."/>
            <person name="Rizzo M."/>
            <person name="Walts A."/>
            <person name="Utterback T."/>
            <person name="Fujii C.Y."/>
            <person name="Shea T.P."/>
            <person name="Creasy T.H."/>
            <person name="Haas B."/>
            <person name="Maiti R."/>
            <person name="Wu D."/>
            <person name="Peterson J."/>
            <person name="Van Aken S."/>
            <person name="Pai G."/>
            <person name="Militscher J."/>
            <person name="Sellers P."/>
            <person name="Gill J.E."/>
            <person name="Feldblyum T.V."/>
            <person name="Preuss D."/>
            <person name="Lin X."/>
            <person name="Nierman W.C."/>
            <person name="Salzberg S.L."/>
            <person name="White O."/>
            <person name="Venter J.C."/>
            <person name="Fraser C.M."/>
            <person name="Kaneko T."/>
            <person name="Nakamura Y."/>
            <person name="Sato S."/>
            <person name="Kato T."/>
            <person name="Asamizu E."/>
            <person name="Sasamoto S."/>
            <person name="Kimura T."/>
            <person name="Idesawa K."/>
            <person name="Kawashima K."/>
            <person name="Kishida Y."/>
            <person name="Kiyokawa C."/>
            <person name="Kohara M."/>
            <person name="Matsumoto M."/>
            <person name="Matsuno A."/>
            <person name="Muraki A."/>
            <person name="Nakayama S."/>
            <person name="Nakazaki N."/>
            <person name="Shinpo S."/>
            <person name="Takeuchi C."/>
            <person name="Wada T."/>
            <person name="Watanabe A."/>
            <person name="Yamada M."/>
            <person name="Yasuda M."/>
            <person name="Tabata S."/>
        </authorList>
    </citation>
    <scope>NUCLEOTIDE SEQUENCE [LARGE SCALE GENOMIC DNA]</scope>
    <source>
        <strain>cv. Columbia</strain>
    </source>
</reference>
<reference key="2">
    <citation type="journal article" date="2017" name="Plant J.">
        <title>Araport11: a complete reannotation of the Arabidopsis thaliana reference genome.</title>
        <authorList>
            <person name="Cheng C.Y."/>
            <person name="Krishnakumar V."/>
            <person name="Chan A.P."/>
            <person name="Thibaud-Nissen F."/>
            <person name="Schobel S."/>
            <person name="Town C.D."/>
        </authorList>
    </citation>
    <scope>GENOME REANNOTATION</scope>
    <source>
        <strain>cv. Columbia</strain>
    </source>
</reference>
<reference key="3">
    <citation type="journal article" date="2004" name="Genome Res.">
        <title>Whole genome sequence comparisons and 'full-length' cDNA sequences: a combined approach to evaluate and improve Arabidopsis genome annotation.</title>
        <authorList>
            <person name="Castelli V."/>
            <person name="Aury J.-M."/>
            <person name="Jaillon O."/>
            <person name="Wincker P."/>
            <person name="Clepet C."/>
            <person name="Menard M."/>
            <person name="Cruaud C."/>
            <person name="Quetier F."/>
            <person name="Scarpelli C."/>
            <person name="Schaechter V."/>
            <person name="Temple G."/>
            <person name="Caboche M."/>
            <person name="Weissenbach J."/>
            <person name="Salanoubat M."/>
        </authorList>
    </citation>
    <scope>NUCLEOTIDE SEQUENCE [LARGE SCALE MRNA]</scope>
    <source>
        <strain>cv. Columbia</strain>
    </source>
</reference>
<organism>
    <name type="scientific">Arabidopsis thaliana</name>
    <name type="common">Mouse-ear cress</name>
    <dbReference type="NCBI Taxonomy" id="3702"/>
    <lineage>
        <taxon>Eukaryota</taxon>
        <taxon>Viridiplantae</taxon>
        <taxon>Streptophyta</taxon>
        <taxon>Embryophyta</taxon>
        <taxon>Tracheophyta</taxon>
        <taxon>Spermatophyta</taxon>
        <taxon>Magnoliopsida</taxon>
        <taxon>eudicotyledons</taxon>
        <taxon>Gunneridae</taxon>
        <taxon>Pentapetalae</taxon>
        <taxon>rosids</taxon>
        <taxon>malvids</taxon>
        <taxon>Brassicales</taxon>
        <taxon>Brassicaceae</taxon>
        <taxon>Camelineae</taxon>
        <taxon>Arabidopsis</taxon>
    </lineage>
</organism>